<organism>
    <name type="scientific">Xenopus laevis</name>
    <name type="common">African clawed frog</name>
    <dbReference type="NCBI Taxonomy" id="8355"/>
    <lineage>
        <taxon>Eukaryota</taxon>
        <taxon>Metazoa</taxon>
        <taxon>Chordata</taxon>
        <taxon>Craniata</taxon>
        <taxon>Vertebrata</taxon>
        <taxon>Euteleostomi</taxon>
        <taxon>Amphibia</taxon>
        <taxon>Batrachia</taxon>
        <taxon>Anura</taxon>
        <taxon>Pipoidea</taxon>
        <taxon>Pipidae</taxon>
        <taxon>Xenopodinae</taxon>
        <taxon>Xenopus</taxon>
        <taxon>Xenopus</taxon>
    </lineage>
</organism>
<name>SPRNG_XENLA</name>
<dbReference type="EMBL" id="BC073420">
    <property type="protein sequence ID" value="AAH73420.1"/>
    <property type="molecule type" value="mRNA"/>
</dbReference>
<dbReference type="RefSeq" id="NP_001085845.1">
    <property type="nucleotide sequence ID" value="NM_001092376.1"/>
</dbReference>
<dbReference type="SMR" id="Q6GNT2"/>
<dbReference type="GlyCosmos" id="Q6GNT2">
    <property type="glycosylation" value="1 site, No reported glycans"/>
</dbReference>
<dbReference type="DNASU" id="444272"/>
<dbReference type="GeneID" id="444272"/>
<dbReference type="KEGG" id="xla:444272"/>
<dbReference type="AGR" id="Xenbase:XB-GENE-5957003"/>
<dbReference type="CTD" id="444272"/>
<dbReference type="Xenbase" id="XB-GENE-5957003">
    <property type="gene designation" value="spring1.S"/>
</dbReference>
<dbReference type="OMA" id="QHICKSC"/>
<dbReference type="OrthoDB" id="70142at2759"/>
<dbReference type="Proteomes" id="UP000186698">
    <property type="component" value="Chromosome 1S"/>
</dbReference>
<dbReference type="Bgee" id="444272">
    <property type="expression patterns" value="Expressed in blastula and 19 other cell types or tissues"/>
</dbReference>
<dbReference type="GO" id="GO:0000139">
    <property type="term" value="C:Golgi membrane"/>
    <property type="evidence" value="ECO:0000250"/>
    <property type="project" value="UniProtKB"/>
</dbReference>
<dbReference type="GO" id="GO:2000640">
    <property type="term" value="P:positive regulation of SREBP signaling pathway"/>
    <property type="evidence" value="ECO:0000250"/>
    <property type="project" value="UniProtKB"/>
</dbReference>
<dbReference type="InterPro" id="IPR019352">
    <property type="entry name" value="SPRING1"/>
</dbReference>
<dbReference type="PANTHER" id="PTHR13481">
    <property type="entry name" value="SREBP REGULATING GENE PROTEIN"/>
    <property type="match status" value="1"/>
</dbReference>
<dbReference type="PANTHER" id="PTHR13481:SF0">
    <property type="entry name" value="SREBP REGULATING GENE PROTEIN"/>
    <property type="match status" value="1"/>
</dbReference>
<dbReference type="Pfam" id="PF10218">
    <property type="entry name" value="SPRING1"/>
    <property type="match status" value="1"/>
</dbReference>
<feature type="chain" id="PRO_0000294333" description="SREBP regulating gene protein">
    <location>
        <begin position="1"/>
        <end position="205"/>
    </location>
</feature>
<feature type="topological domain" description="Cytoplasmic" evidence="1">
    <location>
        <begin position="1"/>
        <end position="16"/>
    </location>
</feature>
<feature type="transmembrane region" description="Helical" evidence="2">
    <location>
        <begin position="17"/>
        <end position="35"/>
    </location>
</feature>
<feature type="topological domain" description="Lumenal" evidence="1">
    <location>
        <begin position="36"/>
        <end position="205"/>
    </location>
</feature>
<feature type="glycosylation site" description="N-linked (GlcNAc...) asparagine" evidence="2">
    <location>
        <position position="67"/>
    </location>
</feature>
<proteinExistence type="evidence at transcript level"/>
<accession>Q6GNT2</accession>
<sequence length="205" mass="23527">MALYVSMVWRKILRKRWVLGVVFGLSLIYFLTSTFKQEERTVRDRMLLQTGDQDQNLQWKVQFNLGNSSRISNQCRNSVQGKLLVTDDMGYICERKELLANGCCNINVASTKLYSCETCLPNGCCSVYEFCVSCCLQPNKQLQLERFLNKAAVAFQNLFQAVEDHFELCLAKCRTSSQSVQHENTYRNPIAKHCYGESPPELLPI</sequence>
<protein>
    <recommendedName>
        <fullName evidence="1">SREBP regulating gene protein</fullName>
    </recommendedName>
    <alternativeName>
        <fullName>SREBF pathway regulator in Golgi 1</fullName>
    </alternativeName>
</protein>
<gene>
    <name evidence="1" type="primary">spring1</name>
    <name type="synonym">spring</name>
</gene>
<keyword id="KW-0325">Glycoprotein</keyword>
<keyword id="KW-0333">Golgi apparatus</keyword>
<keyword id="KW-0472">Membrane</keyword>
<keyword id="KW-1185">Reference proteome</keyword>
<keyword id="KW-0812">Transmembrane</keyword>
<keyword id="KW-1133">Transmembrane helix</keyword>
<reference key="1">
    <citation type="submission" date="2004-06" db="EMBL/GenBank/DDBJ databases">
        <authorList>
            <consortium name="NIH - Xenopus Gene Collection (XGC) project"/>
        </authorList>
    </citation>
    <scope>NUCLEOTIDE SEQUENCE [LARGE SCALE MRNA]</scope>
    <source>
        <tissue>Embryo</tissue>
    </source>
</reference>
<evidence type="ECO:0000250" key="1">
    <source>
        <dbReference type="UniProtKB" id="Q9H741"/>
    </source>
</evidence>
<evidence type="ECO:0000255" key="2"/>
<evidence type="ECO:0000305" key="3"/>
<comment type="function">
    <text evidence="1">Positively regulates hepatic SREBP signaling pathway by modulating the proper localization of SCAP (SREBP cleavage-activating protein) to the endoplasmic reticulum, thereby controlling the level of functional SCAP.</text>
</comment>
<comment type="subcellular location">
    <subcellularLocation>
        <location evidence="1">Golgi apparatus membrane</location>
        <topology evidence="2">Single-pass membrane protein</topology>
    </subcellularLocation>
</comment>
<comment type="similarity">
    <text evidence="3">Belongs to the SPRING family.</text>
</comment>